<reference key="1">
    <citation type="journal article" date="2000" name="Biochem. J.">
        <title>Hepatic expression, synthesis and secretion of a novel fibrinogen/angiopoietin-related protein that prevents endothelial-cell apoptosis.</title>
        <authorList>
            <person name="Kim I."/>
            <person name="Kim H.-G."/>
            <person name="Kim H."/>
            <person name="Kim H.-H."/>
            <person name="Park S.K."/>
            <person name="Uhm C.-S."/>
            <person name="Lee Z.H."/>
            <person name="Koh G.Y."/>
        </authorList>
    </citation>
    <scope>NUCLEOTIDE SEQUENCE [MRNA]</scope>
    <scope>TISSUE SPECIFICITY</scope>
</reference>
<reference key="2">
    <citation type="journal article" date="2000" name="J. Biol. Chem.">
        <title>Characterization of the fasting-induced adipose factor FIAF, a novel peroxisome proliferator-activated receptor target gene.</title>
        <authorList>
            <person name="Kersten S."/>
            <person name="Mandard S."/>
            <person name="Tan N.S."/>
            <person name="Escher P."/>
            <person name="Metzger D."/>
            <person name="Chambon P."/>
            <person name="Gonzalez F.J."/>
            <person name="Desvergne B."/>
            <person name="Wahli W."/>
        </authorList>
    </citation>
    <scope>NUCLEOTIDE SEQUENCE [MRNA]</scope>
    <scope>TISSUE SPECIFICITY</scope>
    <source>
        <tissue>White adipose tissue</tissue>
    </source>
</reference>
<reference key="3">
    <citation type="journal article" date="2003" name="Cancer Res.">
        <title>Inhibition of angiogenesis and vascular leakiness by angiopoietin-related protein 4.</title>
        <authorList>
            <person name="Ito Y."/>
            <person name="Oike Y."/>
            <person name="Yasunaga K."/>
            <person name="Hamada K."/>
            <person name="Miyata K."/>
            <person name="Matsumoto S."/>
            <person name="Sugano S."/>
            <person name="Tanihara H."/>
            <person name="Masuho Y."/>
            <person name="Suda T."/>
        </authorList>
    </citation>
    <scope>NUCLEOTIDE SEQUENCE [MRNA]</scope>
    <scope>FUNCTION</scope>
    <scope>SUBCELLULAR LOCATION</scope>
    <scope>SUBUNIT</scope>
    <scope>TRANSGENIC MICE</scope>
</reference>
<reference key="4">
    <citation type="journal article" date="2000" name="Mol. Cell. Biol.">
        <title>Peroxisome proliferator-activated receptor gamma target gene encoding a novel angiopoietin-related protein associated with adipose differentiation.</title>
        <authorList>
            <person name="Yoon J.C."/>
            <person name="Chickering T.W."/>
            <person name="Rosen E.D."/>
            <person name="Dussault B."/>
            <person name="Qin Y."/>
            <person name="Soukas A."/>
            <person name="Friedman J.M."/>
            <person name="Holmes W.E."/>
            <person name="Spiegelman B.M."/>
        </authorList>
    </citation>
    <scope>NUCLEOTIDE SEQUENCE [MRNA]</scope>
    <scope>DEVELOPMENTAL STAGE</scope>
    <scope>INDUCTION</scope>
    <source>
        <tissue>Adipocyte</tissue>
    </source>
</reference>
<reference key="5">
    <citation type="journal article" date="2005" name="Science">
        <title>The transcriptional landscape of the mammalian genome.</title>
        <authorList>
            <person name="Carninci P."/>
            <person name="Kasukawa T."/>
            <person name="Katayama S."/>
            <person name="Gough J."/>
            <person name="Frith M.C."/>
            <person name="Maeda N."/>
            <person name="Oyama R."/>
            <person name="Ravasi T."/>
            <person name="Lenhard B."/>
            <person name="Wells C."/>
            <person name="Kodzius R."/>
            <person name="Shimokawa K."/>
            <person name="Bajic V.B."/>
            <person name="Brenner S.E."/>
            <person name="Batalov S."/>
            <person name="Forrest A.R."/>
            <person name="Zavolan M."/>
            <person name="Davis M.J."/>
            <person name="Wilming L.G."/>
            <person name="Aidinis V."/>
            <person name="Allen J.E."/>
            <person name="Ambesi-Impiombato A."/>
            <person name="Apweiler R."/>
            <person name="Aturaliya R.N."/>
            <person name="Bailey T.L."/>
            <person name="Bansal M."/>
            <person name="Baxter L."/>
            <person name="Beisel K.W."/>
            <person name="Bersano T."/>
            <person name="Bono H."/>
            <person name="Chalk A.M."/>
            <person name="Chiu K.P."/>
            <person name="Choudhary V."/>
            <person name="Christoffels A."/>
            <person name="Clutterbuck D.R."/>
            <person name="Crowe M.L."/>
            <person name="Dalla E."/>
            <person name="Dalrymple B.P."/>
            <person name="de Bono B."/>
            <person name="Della Gatta G."/>
            <person name="di Bernardo D."/>
            <person name="Down T."/>
            <person name="Engstrom P."/>
            <person name="Fagiolini M."/>
            <person name="Faulkner G."/>
            <person name="Fletcher C.F."/>
            <person name="Fukushima T."/>
            <person name="Furuno M."/>
            <person name="Futaki S."/>
            <person name="Gariboldi M."/>
            <person name="Georgii-Hemming P."/>
            <person name="Gingeras T.R."/>
            <person name="Gojobori T."/>
            <person name="Green R.E."/>
            <person name="Gustincich S."/>
            <person name="Harbers M."/>
            <person name="Hayashi Y."/>
            <person name="Hensch T.K."/>
            <person name="Hirokawa N."/>
            <person name="Hill D."/>
            <person name="Huminiecki L."/>
            <person name="Iacono M."/>
            <person name="Ikeo K."/>
            <person name="Iwama A."/>
            <person name="Ishikawa T."/>
            <person name="Jakt M."/>
            <person name="Kanapin A."/>
            <person name="Katoh M."/>
            <person name="Kawasawa Y."/>
            <person name="Kelso J."/>
            <person name="Kitamura H."/>
            <person name="Kitano H."/>
            <person name="Kollias G."/>
            <person name="Krishnan S.P."/>
            <person name="Kruger A."/>
            <person name="Kummerfeld S.K."/>
            <person name="Kurochkin I.V."/>
            <person name="Lareau L.F."/>
            <person name="Lazarevic D."/>
            <person name="Lipovich L."/>
            <person name="Liu J."/>
            <person name="Liuni S."/>
            <person name="McWilliam S."/>
            <person name="Madan Babu M."/>
            <person name="Madera M."/>
            <person name="Marchionni L."/>
            <person name="Matsuda H."/>
            <person name="Matsuzawa S."/>
            <person name="Miki H."/>
            <person name="Mignone F."/>
            <person name="Miyake S."/>
            <person name="Morris K."/>
            <person name="Mottagui-Tabar S."/>
            <person name="Mulder N."/>
            <person name="Nakano N."/>
            <person name="Nakauchi H."/>
            <person name="Ng P."/>
            <person name="Nilsson R."/>
            <person name="Nishiguchi S."/>
            <person name="Nishikawa S."/>
            <person name="Nori F."/>
            <person name="Ohara O."/>
            <person name="Okazaki Y."/>
            <person name="Orlando V."/>
            <person name="Pang K.C."/>
            <person name="Pavan W.J."/>
            <person name="Pavesi G."/>
            <person name="Pesole G."/>
            <person name="Petrovsky N."/>
            <person name="Piazza S."/>
            <person name="Reed J."/>
            <person name="Reid J.F."/>
            <person name="Ring B.Z."/>
            <person name="Ringwald M."/>
            <person name="Rost B."/>
            <person name="Ruan Y."/>
            <person name="Salzberg S.L."/>
            <person name="Sandelin A."/>
            <person name="Schneider C."/>
            <person name="Schoenbach C."/>
            <person name="Sekiguchi K."/>
            <person name="Semple C.A."/>
            <person name="Seno S."/>
            <person name="Sessa L."/>
            <person name="Sheng Y."/>
            <person name="Shibata Y."/>
            <person name="Shimada H."/>
            <person name="Shimada K."/>
            <person name="Silva D."/>
            <person name="Sinclair B."/>
            <person name="Sperling S."/>
            <person name="Stupka E."/>
            <person name="Sugiura K."/>
            <person name="Sultana R."/>
            <person name="Takenaka Y."/>
            <person name="Taki K."/>
            <person name="Tammoja K."/>
            <person name="Tan S.L."/>
            <person name="Tang S."/>
            <person name="Taylor M.S."/>
            <person name="Tegner J."/>
            <person name="Teichmann S.A."/>
            <person name="Ueda H.R."/>
            <person name="van Nimwegen E."/>
            <person name="Verardo R."/>
            <person name="Wei C.L."/>
            <person name="Yagi K."/>
            <person name="Yamanishi H."/>
            <person name="Zabarovsky E."/>
            <person name="Zhu S."/>
            <person name="Zimmer A."/>
            <person name="Hide W."/>
            <person name="Bult C."/>
            <person name="Grimmond S.M."/>
            <person name="Teasdale R.D."/>
            <person name="Liu E.T."/>
            <person name="Brusic V."/>
            <person name="Quackenbush J."/>
            <person name="Wahlestedt C."/>
            <person name="Mattick J.S."/>
            <person name="Hume D.A."/>
            <person name="Kai C."/>
            <person name="Sasaki D."/>
            <person name="Tomaru Y."/>
            <person name="Fukuda S."/>
            <person name="Kanamori-Katayama M."/>
            <person name="Suzuki M."/>
            <person name="Aoki J."/>
            <person name="Arakawa T."/>
            <person name="Iida J."/>
            <person name="Imamura K."/>
            <person name="Itoh M."/>
            <person name="Kato T."/>
            <person name="Kawaji H."/>
            <person name="Kawagashira N."/>
            <person name="Kawashima T."/>
            <person name="Kojima M."/>
            <person name="Kondo S."/>
            <person name="Konno H."/>
            <person name="Nakano K."/>
            <person name="Ninomiya N."/>
            <person name="Nishio T."/>
            <person name="Okada M."/>
            <person name="Plessy C."/>
            <person name="Shibata K."/>
            <person name="Shiraki T."/>
            <person name="Suzuki S."/>
            <person name="Tagami M."/>
            <person name="Waki K."/>
            <person name="Watahiki A."/>
            <person name="Okamura-Oho Y."/>
            <person name="Suzuki H."/>
            <person name="Kawai J."/>
            <person name="Hayashizaki Y."/>
        </authorList>
    </citation>
    <scope>NUCLEOTIDE SEQUENCE [LARGE SCALE MRNA]</scope>
    <source>
        <strain>C57BL/6J</strain>
        <tissue>Skin</tissue>
        <tissue>Testis</tissue>
    </source>
</reference>
<reference key="6">
    <citation type="journal article" date="2004" name="Mamm. Genome">
        <title>Gene content of the 750-kb critical region for mouse embryonic ectoderm lethal tcl-w5.</title>
        <authorList>
            <person name="Abe K."/>
            <person name="Yuzuriha M."/>
            <person name="Sugimoto M."/>
            <person name="Ko M.S."/>
            <person name="Brathwaite M.E."/>
            <person name="Waeltz P."/>
            <person name="Nagaraja R."/>
        </authorList>
    </citation>
    <scope>NUCLEOTIDE SEQUENCE [LARGE SCALE GENOMIC DNA]</scope>
    <source>
        <strain>129/Sv</strain>
    </source>
</reference>
<reference key="7">
    <citation type="journal article" date="2003" name="Genome Res.">
        <title>Analysis of the gene-dense major histocompatibility complex class III region and its comparison to mouse.</title>
        <authorList>
            <person name="Xie T."/>
            <person name="Rowen L."/>
            <person name="Aguado B."/>
            <person name="Ahearn M.E."/>
            <person name="Madan A."/>
            <person name="Qin S."/>
            <person name="Campbell R.D."/>
            <person name="Hood L."/>
        </authorList>
    </citation>
    <scope>NUCLEOTIDE SEQUENCE [LARGE SCALE GENOMIC DNA]</scope>
    <source>
        <strain>129</strain>
    </source>
</reference>
<reference key="8">
    <citation type="journal article" date="2004" name="Genome Res.">
        <title>The status, quality, and expansion of the NIH full-length cDNA project: the Mammalian Gene Collection (MGC).</title>
        <authorList>
            <consortium name="The MGC Project Team"/>
        </authorList>
    </citation>
    <scope>NUCLEOTIDE SEQUENCE [LARGE SCALE MRNA]</scope>
    <source>
        <tissue>Liver</tissue>
    </source>
</reference>
<reference key="9">
    <citation type="journal article" date="2005" name="Proc. Natl. Acad. Sci. U.S.A.">
        <title>Angiopoietin-like protein 4 decreases blood glucose and improves glucose tolerance but induces hyperlipidemia and hepatic steatosis in mice.</title>
        <authorList>
            <person name="Xu A."/>
            <person name="Lam M.C."/>
            <person name="Chan K.W."/>
            <person name="Wang Y."/>
            <person name="Zhang J."/>
            <person name="Hoo R.L."/>
            <person name="Xu J.Y."/>
            <person name="Chen B."/>
            <person name="Chow W.S."/>
            <person name="Tso A.W."/>
            <person name="Lam K.S."/>
        </authorList>
    </citation>
    <scope>FUNCTION</scope>
    <scope>SUBCELLULAR LOCATION</scope>
</reference>
<reference key="10">
    <citation type="journal article" date="2006" name="Circ. Res.">
        <title>Extracellular matrix-bound angiopoietin-like 4 inhibits endothelial cell adhesion, migration, and sprouting and alters actin cytoskeleton.</title>
        <authorList>
            <person name="Cazes A."/>
            <person name="Galaup A."/>
            <person name="Chomel C."/>
            <person name="Bignon M."/>
            <person name="Brechot N."/>
            <person name="Le Jan S."/>
            <person name="Weber H."/>
            <person name="Corvol P."/>
            <person name="Muller L."/>
            <person name="Germain S."/>
            <person name="Monnot C."/>
        </authorList>
    </citation>
    <scope>INDUCTION BY ISCHEMIA</scope>
</reference>
<reference key="11">
    <citation type="journal article" date="2006" name="Proc. Natl. Acad. Sci. U.S.A.">
        <title>Angiopoietin-like 4 prevents metastasis through inhibition of vascular permeability and tumor cell motility and invasiveness.</title>
        <authorList>
            <person name="Galaup A."/>
            <person name="Cazes A."/>
            <person name="Le Jan S."/>
            <person name="Philippe J."/>
            <person name="Connault E."/>
            <person name="Le Coz E."/>
            <person name="Mekid H."/>
            <person name="Mir L.M."/>
            <person name="Opolon P."/>
            <person name="Corvol P."/>
            <person name="Monnot C."/>
            <person name="Germain S."/>
        </authorList>
    </citation>
    <scope>FUNCTION</scope>
    <scope>XENOGRAFT MODELS</scope>
</reference>
<reference key="12">
    <citation type="journal article" date="2007" name="Proc. Natl. Acad. Sci. U.S.A.">
        <title>Lipid-lowering effects of anti-angiopoietin-like 4 antibody recapitulate the lipid phenotype found in angiopoietin-like 4 knockout mice.</title>
        <authorList>
            <person name="Desai U."/>
            <person name="Lee E.C."/>
            <person name="Chung K."/>
            <person name="Gao C."/>
            <person name="Gay J."/>
            <person name="Key B."/>
            <person name="Hansen G."/>
            <person name="Machajewski D."/>
            <person name="Platt K.A."/>
            <person name="Sands A.T."/>
            <person name="Schneider M."/>
            <person name="Van Sligtenhorst I."/>
            <person name="Suwanichkul A."/>
            <person name="Vogel P."/>
            <person name="Wilganowski N."/>
            <person name="Wingert J."/>
            <person name="Zambrowicz B.P."/>
            <person name="Landes G."/>
            <person name="Powell D.R."/>
        </authorList>
    </citation>
    <scope>FUNCTION</scope>
    <scope>DISRUPTION PHENOTYPE</scope>
    <scope>TISSUE SPECIFICITY</scope>
</reference>
<reference key="13">
    <citation type="journal article" date="2011" name="J. Biol. Chem.">
        <title>Alteration of developmental and pathological retinal angiogenesis in angptl4-deficient mice.</title>
        <authorList>
            <person name="Perdiguero E.G."/>
            <person name="Galaup A."/>
            <person name="Durand M."/>
            <person name="Teillon J."/>
            <person name="Philippe J."/>
            <person name="Valenzuela D.M."/>
            <person name="Murphy A.J."/>
            <person name="Yancopoulos G.D."/>
            <person name="Thurston G."/>
            <person name="Germain S."/>
        </authorList>
    </citation>
    <scope>FUNCTION</scope>
    <scope>DISRUPTION PHENOTYPE</scope>
    <scope>DEVELOPMENTAL STAGE</scope>
</reference>
<reference key="14">
    <citation type="journal article" date="2017" name="Arterioscler. Thromb. Vasc. Biol.">
        <title>Zebrafish Model for Functional Screening of Flow-Responsive Genes.</title>
        <authorList>
            <person name="Serbanovic-Canic J."/>
            <person name="de Luca A."/>
            <person name="Warboys C."/>
            <person name="Ferreira P.F."/>
            <person name="Luong L.A."/>
            <person name="Hsiao S."/>
            <person name="Gauci I."/>
            <person name="Mahmoud M."/>
            <person name="Feng S."/>
            <person name="Souilhol C."/>
            <person name="Bowden N."/>
            <person name="Ashton J.P."/>
            <person name="Walczak H."/>
            <person name="Firmin D."/>
            <person name="Krams R."/>
            <person name="Mason J.C."/>
            <person name="Haskard D.O."/>
            <person name="Sherwin S."/>
            <person name="Ridger V."/>
            <person name="Chico T.J."/>
            <person name="Evans P.C."/>
        </authorList>
    </citation>
    <scope>TISSUE SPECIFICITY</scope>
</reference>
<reference key="15">
    <citation type="journal article" date="2018" name="Nat. Commun.">
        <title>Genetic inactivation of ANGPTL4 improves glucose homeostasis and is associated with reduced risk of diabetes.</title>
        <authorList>
            <person name="Gusarova V."/>
            <person name="O'Dushlaine C."/>
            <person name="Teslovich T.M."/>
            <person name="Benotti P.N."/>
            <person name="Mirshahi T."/>
            <person name="Gottesman O."/>
            <person name="Van Hout C.V."/>
            <person name="Murray M.F."/>
            <person name="Mahajan A."/>
            <person name="Nielsen J.B."/>
            <person name="Fritsche L."/>
            <person name="Wulff A.B."/>
            <person name="Gudbjartsson D.F."/>
            <person name="Sjoegren M."/>
            <person name="Emdin C.A."/>
            <person name="Scott R.A."/>
            <person name="Lee W.J."/>
            <person name="Small A."/>
            <person name="Kwee L.C."/>
            <person name="Dwivedi O.P."/>
            <person name="Prasad R.B."/>
            <person name="Bruse S."/>
            <person name="Lopez A.E."/>
            <person name="Penn J."/>
            <person name="Marcketta A."/>
            <person name="Leader J.B."/>
            <person name="Still C.D."/>
            <person name="Kirchner H.L."/>
            <person name="Mirshahi U.L."/>
            <person name="Wardeh A.H."/>
            <person name="Hartle C.M."/>
            <person name="Habegger L."/>
            <person name="Fetterolf S.N."/>
            <person name="Tusie-Luna T."/>
            <person name="Morris A.P."/>
            <person name="Holm H."/>
            <person name="Steinthorsdottir V."/>
            <person name="Sulem P."/>
            <person name="Thorsteinsdottir U."/>
            <person name="Rotter J.I."/>
            <person name="Chuang L.M."/>
            <person name="Damrauer S."/>
            <person name="Birtwell D."/>
            <person name="Brummett C.M."/>
            <person name="Khera A.V."/>
            <person name="Natarajan P."/>
            <person name="Orho-Melander M."/>
            <person name="Flannick J."/>
            <person name="Lotta L.A."/>
            <person name="Willer C.J."/>
            <person name="Holmen O.L."/>
            <person name="Ritchie M.D."/>
            <person name="Ledbetter D.H."/>
            <person name="Murphy A.J."/>
            <person name="Borecki I.B."/>
            <person name="Reid J.G."/>
            <person name="Overton J.D."/>
            <person name="Hansson O."/>
            <person name="Groop L."/>
            <person name="Shah S.H."/>
            <person name="Kraus W.E."/>
            <person name="Rader D.J."/>
            <person name="Chen Y.I."/>
            <person name="Hveem K."/>
            <person name="Wareham N.J."/>
            <person name="Kathiresan S."/>
            <person name="Melander O."/>
            <person name="Stefansson K."/>
            <person name="Nordestgaard B.G."/>
            <person name="Tybjaerg-Hansen A."/>
            <person name="Abecasis G.R."/>
            <person name="Altshuler D."/>
            <person name="Florez J.C."/>
            <person name="Boehnke M."/>
            <person name="McCarthy M.I."/>
            <person name="Yancopoulos G.D."/>
            <person name="Carey D.J."/>
            <person name="Shuldiner A.R."/>
            <person name="Baras A."/>
            <person name="Dewey F.E."/>
            <person name="Gromada J."/>
        </authorList>
    </citation>
    <scope>FUNCTION</scope>
    <scope>DISRUPTION PHENOTYPE</scope>
</reference>
<accession>Q9Z1P8</accession>
<accession>Q78ZJ9</accession>
<accession>Q9JHX7</accession>
<accession>Q9JLX7</accession>
<protein>
    <recommendedName>
        <fullName>Angiopoietin-related protein 4</fullName>
    </recommendedName>
    <alternativeName>
        <fullName>425O18-1</fullName>
    </alternativeName>
    <alternativeName>
        <fullName>Angiopoietin-like protein 4</fullName>
    </alternativeName>
    <alternativeName>
        <fullName evidence="17">Fasting-induced adipose factor</fullName>
    </alternativeName>
    <alternativeName>
        <fullName evidence="16">Hepatic fibrinogen/angiopoietin-related protein</fullName>
        <shortName evidence="16">HFARP</shortName>
    </alternativeName>
    <alternativeName>
        <fullName>Secreted protein Bk89</fullName>
    </alternativeName>
    <component>
        <recommendedName>
            <fullName>ANGPTL4 N-terminal chain</fullName>
        </recommendedName>
    </component>
    <component>
        <recommendedName>
            <fullName>ANGPTL4 C-terminal chain</fullName>
        </recommendedName>
    </component>
</protein>
<sequence>MRCAPTAGAALVLCAATAGLLSAQGRPAQPEPPRFASWDEMNLLAHGLLQLGHGLREHVERTRGQLGALERRMAACGNACQGPKGKDAPFKDSEDRVPEGQTPETLQSLQTQLKAQNSKIQQLFQKVAQQQRYLSKQNLRIQNLQSQIDLLAPTHLDNGVDKTSRGKRLPKMTQLIGLTPNATHLHRPPRDCQELFQEGERHSGLFQIQPLGSPPFLVNCEMTSDGGWTVIQRRLNGSVDFNQSWEAYKDGFGDPQGEFWLGLEKMHSITGNRGSQLAVQLQDWDGNAKLLQFPIHLGGEDTAYSLQLTEPTANELGATNVSPNGLSLPFSTWDQDHDLRGDLNCAKSLSGGWWFGTCSHSNLNGQYFHSIPRQRQERKKGIFWKTWKGRYYPLQATTLLIQPMEATAAS</sequence>
<organism>
    <name type="scientific">Mus musculus</name>
    <name type="common">Mouse</name>
    <dbReference type="NCBI Taxonomy" id="10090"/>
    <lineage>
        <taxon>Eukaryota</taxon>
        <taxon>Metazoa</taxon>
        <taxon>Chordata</taxon>
        <taxon>Craniata</taxon>
        <taxon>Vertebrata</taxon>
        <taxon>Euteleostomi</taxon>
        <taxon>Mammalia</taxon>
        <taxon>Eutheria</taxon>
        <taxon>Euarchontoglires</taxon>
        <taxon>Glires</taxon>
        <taxon>Rodentia</taxon>
        <taxon>Myomorpha</taxon>
        <taxon>Muroidea</taxon>
        <taxon>Muridae</taxon>
        <taxon>Murinae</taxon>
        <taxon>Mus</taxon>
        <taxon>Mus</taxon>
    </lineage>
</organism>
<gene>
    <name type="primary">Angptl4</name>
    <name type="synonym">Farp</name>
    <name evidence="17" type="synonym">Fiaf</name>
    <name type="synonym">Ng27</name>
</gene>
<keyword id="KW-0037">Angiogenesis</keyword>
<keyword id="KW-0175">Coiled coil</keyword>
<keyword id="KW-1015">Disulfide bond</keyword>
<keyword id="KW-0272">Extracellular matrix</keyword>
<keyword id="KW-0325">Glycoprotein</keyword>
<keyword id="KW-0443">Lipid metabolism</keyword>
<keyword id="KW-1185">Reference proteome</keyword>
<keyword id="KW-0964">Secreted</keyword>
<keyword id="KW-0732">Signal</keyword>
<proteinExistence type="evidence at protein level"/>
<dbReference type="EMBL" id="AF169313">
    <property type="protein sequence ID" value="AAF62869.1"/>
    <property type="molecule type" value="mRNA"/>
</dbReference>
<dbReference type="EMBL" id="AF278699">
    <property type="protein sequence ID" value="AAF86342.1"/>
    <property type="molecule type" value="mRNA"/>
</dbReference>
<dbReference type="EMBL" id="AB054540">
    <property type="protein sequence ID" value="BAB83079.1"/>
    <property type="molecule type" value="mRNA"/>
</dbReference>
<dbReference type="EMBL" id="AF123261">
    <property type="protein sequence ID" value="AAF42969.1"/>
    <property type="molecule type" value="mRNA"/>
</dbReference>
<dbReference type="EMBL" id="AK014564">
    <property type="protein sequence ID" value="BAB29431.1"/>
    <property type="molecule type" value="mRNA"/>
</dbReference>
<dbReference type="EMBL" id="AK132761">
    <property type="protein sequence ID" value="BAE21342.1"/>
    <property type="molecule type" value="mRNA"/>
</dbReference>
<dbReference type="EMBL" id="AF528162">
    <property type="protein sequence ID" value="AAO17378.1"/>
    <property type="molecule type" value="Genomic_DNA"/>
</dbReference>
<dbReference type="EMBL" id="AF110520">
    <property type="protein sequence ID" value="AAC97965.1"/>
    <property type="molecule type" value="Genomic_DNA"/>
</dbReference>
<dbReference type="EMBL" id="BC006611">
    <property type="protein sequence ID" value="AAH06611.1"/>
    <property type="molecule type" value="mRNA"/>
</dbReference>
<dbReference type="EMBL" id="BC021343">
    <property type="protein sequence ID" value="AAH21343.1"/>
    <property type="molecule type" value="mRNA"/>
</dbReference>
<dbReference type="EMBL" id="BC025797">
    <property type="protein sequence ID" value="AAH25797.1"/>
    <property type="molecule type" value="mRNA"/>
</dbReference>
<dbReference type="CCDS" id="CCDS28629.1"/>
<dbReference type="RefSeq" id="NP_065606.2">
    <property type="nucleotide sequence ID" value="NM_020581.2"/>
</dbReference>
<dbReference type="SMR" id="Q9Z1P8"/>
<dbReference type="BioGRID" id="208345">
    <property type="interactions" value="3"/>
</dbReference>
<dbReference type="DIP" id="DIP-61311N"/>
<dbReference type="FunCoup" id="Q9Z1P8">
    <property type="interactions" value="304"/>
</dbReference>
<dbReference type="IntAct" id="Q9Z1P8">
    <property type="interactions" value="1"/>
</dbReference>
<dbReference type="STRING" id="10090.ENSMUSP00000002360"/>
<dbReference type="GlyCosmos" id="Q9Z1P8">
    <property type="glycosylation" value="3 sites, No reported glycans"/>
</dbReference>
<dbReference type="GlyGen" id="Q9Z1P8">
    <property type="glycosylation" value="3 sites"/>
</dbReference>
<dbReference type="PhosphoSitePlus" id="Q9Z1P8"/>
<dbReference type="PaxDb" id="10090-ENSMUSP00000002360"/>
<dbReference type="ProteomicsDB" id="296356"/>
<dbReference type="Antibodypedia" id="1649">
    <property type="antibodies" value="574 antibodies from 38 providers"/>
</dbReference>
<dbReference type="DNASU" id="57875"/>
<dbReference type="Ensembl" id="ENSMUST00000002360.17">
    <property type="protein sequence ID" value="ENSMUSP00000002360.10"/>
    <property type="gene ID" value="ENSMUSG00000002289.17"/>
</dbReference>
<dbReference type="GeneID" id="57875"/>
<dbReference type="KEGG" id="mmu:57875"/>
<dbReference type="UCSC" id="uc008bzp.2">
    <property type="organism name" value="mouse"/>
</dbReference>
<dbReference type="AGR" id="MGI:1888999"/>
<dbReference type="CTD" id="51129"/>
<dbReference type="MGI" id="MGI:1888999">
    <property type="gene designation" value="Angptl4"/>
</dbReference>
<dbReference type="VEuPathDB" id="HostDB:ENSMUSG00000002289"/>
<dbReference type="eggNOG" id="KOG2579">
    <property type="taxonomic scope" value="Eukaryota"/>
</dbReference>
<dbReference type="GeneTree" id="ENSGT00940000159478"/>
<dbReference type="HOGENOM" id="CLU_038628_2_1_1"/>
<dbReference type="InParanoid" id="Q9Z1P8"/>
<dbReference type="OMA" id="MATGFPF"/>
<dbReference type="OrthoDB" id="6145874at2759"/>
<dbReference type="PhylomeDB" id="Q9Z1P8"/>
<dbReference type="TreeFam" id="TF329953"/>
<dbReference type="Reactome" id="R-MMU-8963889">
    <property type="pathway name" value="Assembly of active LPL and LIPC lipase complexes"/>
</dbReference>
<dbReference type="Reactome" id="R-MMU-9762292">
    <property type="pathway name" value="Regulation of CDH11 function"/>
</dbReference>
<dbReference type="BioGRID-ORCS" id="57875">
    <property type="hits" value="5 hits in 80 CRISPR screens"/>
</dbReference>
<dbReference type="ChiTaRS" id="Angptl4">
    <property type="organism name" value="mouse"/>
</dbReference>
<dbReference type="PRO" id="PR:Q9Z1P8"/>
<dbReference type="Proteomes" id="UP000000589">
    <property type="component" value="Chromosome 17"/>
</dbReference>
<dbReference type="RNAct" id="Q9Z1P8">
    <property type="molecule type" value="protein"/>
</dbReference>
<dbReference type="Bgee" id="ENSMUSG00000002289">
    <property type="expression patterns" value="Expressed in brown adipose tissue and 183 other cell types or tissues"/>
</dbReference>
<dbReference type="ExpressionAtlas" id="Q9Z1P8">
    <property type="expression patterns" value="baseline and differential"/>
</dbReference>
<dbReference type="GO" id="GO:0005576">
    <property type="term" value="C:extracellular region"/>
    <property type="evidence" value="ECO:0000314"/>
    <property type="project" value="UniProtKB"/>
</dbReference>
<dbReference type="GO" id="GO:0005615">
    <property type="term" value="C:extracellular space"/>
    <property type="evidence" value="ECO:0000314"/>
    <property type="project" value="MGI"/>
</dbReference>
<dbReference type="GO" id="GO:0004857">
    <property type="term" value="F:enzyme inhibitor activity"/>
    <property type="evidence" value="ECO:0000314"/>
    <property type="project" value="UniProtKB"/>
</dbReference>
<dbReference type="GO" id="GO:0042802">
    <property type="term" value="F:identical protein binding"/>
    <property type="evidence" value="ECO:0007669"/>
    <property type="project" value="Ensembl"/>
</dbReference>
<dbReference type="GO" id="GO:0035473">
    <property type="term" value="F:lipase binding"/>
    <property type="evidence" value="ECO:0007669"/>
    <property type="project" value="Ensembl"/>
</dbReference>
<dbReference type="GO" id="GO:0055102">
    <property type="term" value="F:lipase inhibitor activity"/>
    <property type="evidence" value="ECO:0007669"/>
    <property type="project" value="Ensembl"/>
</dbReference>
<dbReference type="GO" id="GO:0001525">
    <property type="term" value="P:angiogenesis"/>
    <property type="evidence" value="ECO:0007669"/>
    <property type="project" value="UniProtKB-KW"/>
</dbReference>
<dbReference type="GO" id="GO:0007596">
    <property type="term" value="P:blood coagulation"/>
    <property type="evidence" value="ECO:0007669"/>
    <property type="project" value="InterPro"/>
</dbReference>
<dbReference type="GO" id="GO:0009267">
    <property type="term" value="P:cellular response to starvation"/>
    <property type="evidence" value="ECO:0000303"/>
    <property type="project" value="UniProtKB"/>
</dbReference>
<dbReference type="GO" id="GO:0072577">
    <property type="term" value="P:endothelial cell apoptotic process"/>
    <property type="evidence" value="ECO:0000314"/>
    <property type="project" value="MGI"/>
</dbReference>
<dbReference type="GO" id="GO:0006629">
    <property type="term" value="P:lipid metabolic process"/>
    <property type="evidence" value="ECO:0007669"/>
    <property type="project" value="UniProtKB-KW"/>
</dbReference>
<dbReference type="GO" id="GO:0043066">
    <property type="term" value="P:negative regulation of apoptotic process"/>
    <property type="evidence" value="ECO:0000314"/>
    <property type="project" value="UniProtKB"/>
</dbReference>
<dbReference type="GO" id="GO:2000352">
    <property type="term" value="P:negative regulation of endothelial cell apoptotic process"/>
    <property type="evidence" value="ECO:0000314"/>
    <property type="project" value="MGI"/>
</dbReference>
<dbReference type="GO" id="GO:0045717">
    <property type="term" value="P:negative regulation of fatty acid biosynthetic process"/>
    <property type="evidence" value="ECO:0007669"/>
    <property type="project" value="Ensembl"/>
</dbReference>
<dbReference type="GO" id="GO:0051005">
    <property type="term" value="P:negative regulation of lipoprotein lipase activity"/>
    <property type="evidence" value="ECO:0000314"/>
    <property type="project" value="UniProtKB"/>
</dbReference>
<dbReference type="GO" id="GO:0010903">
    <property type="term" value="P:negative regulation of very-low-density lipoprotein particle remodeling"/>
    <property type="evidence" value="ECO:0000315"/>
    <property type="project" value="BHF-UCL"/>
</dbReference>
<dbReference type="GO" id="GO:0045834">
    <property type="term" value="P:positive regulation of lipid metabolic process"/>
    <property type="evidence" value="ECO:0000303"/>
    <property type="project" value="UniProtKB"/>
</dbReference>
<dbReference type="GO" id="GO:0043335">
    <property type="term" value="P:protein unfolding"/>
    <property type="evidence" value="ECO:0007669"/>
    <property type="project" value="Ensembl"/>
</dbReference>
<dbReference type="GO" id="GO:0090318">
    <property type="term" value="P:regulation of chylomicron remodeling"/>
    <property type="evidence" value="ECO:0000315"/>
    <property type="project" value="BHF-UCL"/>
</dbReference>
<dbReference type="GO" id="GO:0001666">
    <property type="term" value="P:response to hypoxia"/>
    <property type="evidence" value="ECO:0007669"/>
    <property type="project" value="Ensembl"/>
</dbReference>
<dbReference type="GO" id="GO:0070328">
    <property type="term" value="P:triglyceride homeostasis"/>
    <property type="evidence" value="ECO:0000315"/>
    <property type="project" value="BHF-UCL"/>
</dbReference>
<dbReference type="CDD" id="cd00087">
    <property type="entry name" value="FReD"/>
    <property type="match status" value="1"/>
</dbReference>
<dbReference type="FunFam" id="4.10.530.10:FF:000001">
    <property type="entry name" value="angiopoietin-2 isoform X1"/>
    <property type="match status" value="1"/>
</dbReference>
<dbReference type="Gene3D" id="3.90.215.10">
    <property type="entry name" value="Gamma Fibrinogen, chain A, domain 1"/>
    <property type="match status" value="1"/>
</dbReference>
<dbReference type="Gene3D" id="4.10.530.10">
    <property type="entry name" value="Gamma-fibrinogen Carboxyl Terminal Fragment, domain 2"/>
    <property type="match status" value="1"/>
</dbReference>
<dbReference type="InterPro" id="IPR037579">
    <property type="entry name" value="FIB_ANG-like"/>
</dbReference>
<dbReference type="InterPro" id="IPR036056">
    <property type="entry name" value="Fibrinogen-like_C"/>
</dbReference>
<dbReference type="InterPro" id="IPR014716">
    <property type="entry name" value="Fibrinogen_a/b/g_C_1"/>
</dbReference>
<dbReference type="InterPro" id="IPR002181">
    <property type="entry name" value="Fibrinogen_a/b/g_C_dom"/>
</dbReference>
<dbReference type="InterPro" id="IPR020837">
    <property type="entry name" value="Fibrinogen_CS"/>
</dbReference>
<dbReference type="PANTHER" id="PTHR47221">
    <property type="entry name" value="FIBRINOGEN ALPHA CHAIN"/>
    <property type="match status" value="1"/>
</dbReference>
<dbReference type="PANTHER" id="PTHR47221:SF6">
    <property type="entry name" value="FIBRINOGEN ALPHA CHAIN"/>
    <property type="match status" value="1"/>
</dbReference>
<dbReference type="Pfam" id="PF00147">
    <property type="entry name" value="Fibrinogen_C"/>
    <property type="match status" value="1"/>
</dbReference>
<dbReference type="SMART" id="SM00186">
    <property type="entry name" value="FBG"/>
    <property type="match status" value="1"/>
</dbReference>
<dbReference type="SUPFAM" id="SSF56496">
    <property type="entry name" value="Fibrinogen C-terminal domain-like"/>
    <property type="match status" value="1"/>
</dbReference>
<dbReference type="PROSITE" id="PS00514">
    <property type="entry name" value="FIBRINOGEN_C_1"/>
    <property type="match status" value="1"/>
</dbReference>
<dbReference type="PROSITE" id="PS51406">
    <property type="entry name" value="FIBRINOGEN_C_2"/>
    <property type="match status" value="1"/>
</dbReference>
<feature type="signal peptide" evidence="2">
    <location>
        <begin position="1"/>
        <end position="23"/>
    </location>
</feature>
<feature type="chain" id="PRO_0000009125" description="Angiopoietin-related protein 4">
    <location>
        <begin position="24"/>
        <end position="410"/>
    </location>
</feature>
<feature type="chain" id="PRO_0000446861" description="ANGPTL4 N-terminal chain">
    <location>
        <begin position="24"/>
        <end position="167"/>
    </location>
</feature>
<feature type="chain" id="PRO_0000446862" description="ANGPTL4 C-terminal chain">
    <location>
        <begin position="168"/>
        <end position="410"/>
    </location>
</feature>
<feature type="domain" description="Fibrinogen C-terminal" evidence="3">
    <location>
        <begin position="183"/>
        <end position="405"/>
    </location>
</feature>
<feature type="region of interest" description="Disordered" evidence="4">
    <location>
        <begin position="79"/>
        <end position="101"/>
    </location>
</feature>
<feature type="coiled-coil region" evidence="2">
    <location>
        <begin position="104"/>
        <end position="152"/>
    </location>
</feature>
<feature type="compositionally biased region" description="Basic and acidic residues" evidence="4">
    <location>
        <begin position="84"/>
        <end position="98"/>
    </location>
</feature>
<feature type="site" description="Cleavage" evidence="1">
    <location>
        <begin position="168"/>
        <end position="169"/>
    </location>
</feature>
<feature type="glycosylation site" description="N-linked (GlcNAc...) asparagine" evidence="2">
    <location>
        <position position="181"/>
    </location>
</feature>
<feature type="glycosylation site" description="N-linked (GlcNAc...) asparagine" evidence="2">
    <location>
        <position position="236"/>
    </location>
</feature>
<feature type="glycosylation site" description="N-linked (GlcNAc...) asparagine" evidence="2">
    <location>
        <position position="242"/>
    </location>
</feature>
<feature type="disulfide bond" evidence="3">
    <location>
        <begin position="192"/>
        <end position="220"/>
    </location>
</feature>
<feature type="disulfide bond" evidence="3">
    <location>
        <begin position="345"/>
        <end position="358"/>
    </location>
</feature>
<feature type="sequence conflict" description="In Ref. 4; AAF42969." evidence="18" ref="4">
    <original>RLP</original>
    <variation>KLS</variation>
    <location>
        <begin position="168"/>
        <end position="170"/>
    </location>
</feature>
<feature type="sequence conflict" description="In Ref. 4; AAF42969." evidence="18" ref="4">
    <original>P</original>
    <variation>S</variation>
    <location>
        <position position="180"/>
    </location>
</feature>
<feature type="sequence conflict" description="In Ref. 4; AAF42969." evidence="18" ref="4">
    <original>P</original>
    <variation>A</variation>
    <location>
        <position position="189"/>
    </location>
</feature>
<feature type="sequence conflict" description="In Ref. 2; AAF86342 and 4; AAF42969." evidence="18" ref="2 4">
    <original>N</original>
    <variation>D</variation>
    <location>
        <position position="272"/>
    </location>
</feature>
<name>ANGL4_MOUSE</name>
<evidence type="ECO:0000250" key="1">
    <source>
        <dbReference type="UniProtKB" id="Q9BY76"/>
    </source>
</evidence>
<evidence type="ECO:0000255" key="2"/>
<evidence type="ECO:0000255" key="3">
    <source>
        <dbReference type="PROSITE-ProRule" id="PRU00739"/>
    </source>
</evidence>
<evidence type="ECO:0000256" key="4">
    <source>
        <dbReference type="SAM" id="MobiDB-lite"/>
    </source>
</evidence>
<evidence type="ECO:0000269" key="5">
    <source>
    </source>
</evidence>
<evidence type="ECO:0000269" key="6">
    <source>
    </source>
</evidence>
<evidence type="ECO:0000269" key="7">
    <source>
    </source>
</evidence>
<evidence type="ECO:0000269" key="8">
    <source>
    </source>
</evidence>
<evidence type="ECO:0000269" key="9">
    <source>
    </source>
</evidence>
<evidence type="ECO:0000269" key="10">
    <source>
    </source>
</evidence>
<evidence type="ECO:0000269" key="11">
    <source>
    </source>
</evidence>
<evidence type="ECO:0000269" key="12">
    <source>
    </source>
</evidence>
<evidence type="ECO:0000269" key="13">
    <source>
    </source>
</evidence>
<evidence type="ECO:0000269" key="14">
    <source>
    </source>
</evidence>
<evidence type="ECO:0000269" key="15">
    <source>
    </source>
</evidence>
<evidence type="ECO:0000303" key="16">
    <source>
    </source>
</evidence>
<evidence type="ECO:0000303" key="17">
    <source>
    </source>
</evidence>
<evidence type="ECO:0000305" key="18"/>
<evidence type="ECO:0000305" key="19">
    <source>
    </source>
</evidence>
<evidence type="ECO:0000305" key="20">
    <source>
    </source>
</evidence>
<comment type="function">
    <text evidence="1 8 9 11 12 13 15 19 20">Mediates inactivation of the lipoprotein lipase LPL, and thereby plays a role in the regulation of triglyceride clearance from the blood serum and in lipid metabolism (PubMed:15837923, PubMed:17609370, PubMed:29899519). May also play a role in regulating glucose homeostasis and insulin sensitivity (PubMed:15837923, PubMed:29899519). Inhibits proliferation, migration, and tubule formation of endothelial cells and reduces vascular leakage (PubMed:14583458, PubMed:17130448, PubMed:21832056). Upon heterologous expression, inhibits the adhesion of endothelial cell to the extracellular matrix (ECM), and inhibits the reorganization of the actin cytoskeleton, formation of actin stress fibers and focal adhesions in endothelial cells that have adhered to ANGPTL4-containing ECM (in vitro) (By similarity). Depending on context, may modulate tumor-related angiogenesis (Probable).</text>
</comment>
<comment type="function">
    <molecule>ANGPTL4 N-terminal chain</molecule>
    <text evidence="1">Mediates inactivation of the lipoprotein lipase LPL, and thereby plays an important role in the regulation of triglyceride clearance from the blood serum and in lipid metabolism. Has higher activity in LPL inactivation than the uncleaved protein.</text>
</comment>
<comment type="subunit">
    <text evidence="1 8">Homooligomer; disulfide-linked via Cys residues in the N-terminal part of the protein (PubMed:14583458). The homooligomer undergoes proteolytic processing to release the ANGPTL4 C-terminal chain, which circulates as a monomer. The homooligomer unprocessed form is able to interact with the extracellular matrix (By similarity).</text>
</comment>
<comment type="subcellular location">
    <subcellularLocation>
        <location evidence="8 9">Secreted</location>
    </subcellularLocation>
    <subcellularLocation>
        <location evidence="1">Secreted</location>
        <location evidence="1">Extracellular space</location>
        <location evidence="1">Extracellular matrix</location>
    </subcellularLocation>
    <text evidence="1">The unprocessed form interacts with the extracellular matrix. This may constitute a dynamic reservoir, a regulatory mechanism of the bioavailability of ANGPTL4.</text>
</comment>
<comment type="tissue specificity">
    <text evidence="5 6 12 14">Detected in liver and kidney (PubMed:10698685, PubMed:17609370). Predominantly expressed in adipose tissue and is strongly up-regulated by fasting in white adipose tissue and liver. More abundant in areas of lower flow stress in the inner curvature compared to the outer curvature regions of the aorta (at protein level) (PubMed:27834691).</text>
</comment>
<comment type="developmental stage">
    <text evidence="7 13">Expressed at low levels in most organs and connective tissue at 13.5 dpc. Between 15.5 dpc and 18.5 dpc, strongest expression in brown fat (PubMed:10866690). Detected in endothelial cells in the capillary plexus, veins and arteries in the retina at 2, 12 and 17 days after birth (PubMed:21832056).</text>
</comment>
<comment type="induction">
    <text evidence="7 10">Induced in interstitial capillaries in response to hind leg ischemia (PubMed:17068295). Alterations in nutrition and leptin administration are found to modulate the expression in vivo.</text>
</comment>
<comment type="PTM">
    <text evidence="1">N-glycosylated.</text>
</comment>
<comment type="PTM">
    <molecule>ANGPTL4 N-terminal chain</molecule>
    <text evidence="1">Forms disulfide-linked dimers and tetramers.</text>
</comment>
<comment type="PTM">
    <text evidence="1">Cleaved into a smaller N-terminal chain and a larger chain that contains the fibrinogen C-terminal domain; both cleaved and uncleaved forms are detected in the extracellular space. The cleaved form is not present within the cell.</text>
</comment>
<comment type="disruption phenotype">
    <text evidence="12 13 15">Pups are born at less than the expected Mendelian rate, indicative of significant embryonic lethality. No obvious phenotype after birth; mice are viable and fertile (PubMed:21832056). Mutant mice have reduced circulating triglyceride and cholesterol levels when fed a high-fat diet (PubMed:17609370, PubMed:29899519). Besides, they display 30% lower non-fasted blood glucose levels and improved glucose tolerance when fed a high-fat diet. In contrast, glucose levels and glucose tolerance are not different from wild-type when mice are kept on a normal diet (PubMed:29899519). The retinal vascular network displays subtle alterations, including a somewhat larger diameter of veins and capillaries. Pups display a delay in pericyte spreading on newly formed capillaries in the retina, and defects in the organization of endothelial cell tight junctions. In retinas from 17 day old animals, hypoxia-induced pathological neovascularization is strongly reduced (PubMed:21832056). Some studies observed decreased survival of suckling pups and of adults kept on a high-fat diet due to intestinal pathologies, with lipogranulomatous lesions of the intestines and their draining lymphatics and mesenteric lymph nodes (PubMed:17609370). Other studies observed no such effects (PubMed:29899519).</text>
</comment>
<comment type="miscellaneous">
    <text evidence="8 11">Upon heterologous expression under the control of the keratinocyte promoter in the skin, inhibits tumor-associated angiogenesis and tumor growth (PubMed:14583458). In xenograft models, it inhibits both intra- and extravasation of tumor cells as well as vascular permeability leading to inhibition of metastases. Expression by tumor cells induces reorganization of the actin cytoskeleton through inhibition of actin stress fiber formation and vinculin localization at focal contacts. It might prevent the metastatic process by inhibiting vascular activity as well as tumor cell motility and invasiveness (PubMed:17130448).</text>
</comment>